<comment type="function">
    <text>Catalyzes the synthesis of activated sulfate.</text>
</comment>
<comment type="catalytic activity">
    <reaction evidence="1">
        <text>adenosine 5'-phosphosulfate + ATP = 3'-phosphoadenylyl sulfate + ADP + H(+)</text>
        <dbReference type="Rhea" id="RHEA:24152"/>
        <dbReference type="ChEBI" id="CHEBI:15378"/>
        <dbReference type="ChEBI" id="CHEBI:30616"/>
        <dbReference type="ChEBI" id="CHEBI:58243"/>
        <dbReference type="ChEBI" id="CHEBI:58339"/>
        <dbReference type="ChEBI" id="CHEBI:456216"/>
        <dbReference type="EC" id="2.7.1.25"/>
    </reaction>
</comment>
<comment type="pathway">
    <text evidence="1">Sulfur metabolism; hydrogen sulfide biosynthesis; sulfite from sulfate: step 2/3.</text>
</comment>
<comment type="similarity">
    <text evidence="1">Belongs to the APS kinase family.</text>
</comment>
<proteinExistence type="inferred from homology"/>
<dbReference type="EC" id="2.7.1.25" evidence="1"/>
<dbReference type="EMBL" id="AE016795">
    <property type="protein sequence ID" value="AAO09232.1"/>
    <property type="molecule type" value="Genomic_DNA"/>
</dbReference>
<dbReference type="RefSeq" id="WP_011078798.1">
    <property type="nucleotide sequence ID" value="NC_004459.3"/>
</dbReference>
<dbReference type="SMR" id="Q8DE75"/>
<dbReference type="KEGG" id="vvu:VV1_0723"/>
<dbReference type="HOGENOM" id="CLU_046932_1_0_6"/>
<dbReference type="UniPathway" id="UPA00140">
    <property type="reaction ID" value="UER00205"/>
</dbReference>
<dbReference type="Proteomes" id="UP000002275">
    <property type="component" value="Chromosome 1"/>
</dbReference>
<dbReference type="GO" id="GO:0004020">
    <property type="term" value="F:adenylylsulfate kinase activity"/>
    <property type="evidence" value="ECO:0007669"/>
    <property type="project" value="UniProtKB-UniRule"/>
</dbReference>
<dbReference type="GO" id="GO:0005524">
    <property type="term" value="F:ATP binding"/>
    <property type="evidence" value="ECO:0007669"/>
    <property type="project" value="UniProtKB-UniRule"/>
</dbReference>
<dbReference type="GO" id="GO:0070814">
    <property type="term" value="P:hydrogen sulfide biosynthetic process"/>
    <property type="evidence" value="ECO:0007669"/>
    <property type="project" value="UniProtKB-UniRule"/>
</dbReference>
<dbReference type="GO" id="GO:0000103">
    <property type="term" value="P:sulfate assimilation"/>
    <property type="evidence" value="ECO:0007669"/>
    <property type="project" value="UniProtKB-UniRule"/>
</dbReference>
<dbReference type="CDD" id="cd02027">
    <property type="entry name" value="APSK"/>
    <property type="match status" value="1"/>
</dbReference>
<dbReference type="FunFam" id="3.40.50.300:FF:000212">
    <property type="entry name" value="Adenylyl-sulfate kinase"/>
    <property type="match status" value="1"/>
</dbReference>
<dbReference type="Gene3D" id="3.40.50.300">
    <property type="entry name" value="P-loop containing nucleotide triphosphate hydrolases"/>
    <property type="match status" value="1"/>
</dbReference>
<dbReference type="HAMAP" id="MF_00065">
    <property type="entry name" value="Adenylyl_sulf_kinase"/>
    <property type="match status" value="1"/>
</dbReference>
<dbReference type="InterPro" id="IPR002891">
    <property type="entry name" value="APS_kinase"/>
</dbReference>
<dbReference type="InterPro" id="IPR027417">
    <property type="entry name" value="P-loop_NTPase"/>
</dbReference>
<dbReference type="NCBIfam" id="TIGR00455">
    <property type="entry name" value="apsK"/>
    <property type="match status" value="1"/>
</dbReference>
<dbReference type="NCBIfam" id="NF003013">
    <property type="entry name" value="PRK03846.1"/>
    <property type="match status" value="1"/>
</dbReference>
<dbReference type="PANTHER" id="PTHR11055:SF63">
    <property type="entry name" value="ADENYLYL-SULFATE KINASE 1, CHLOROPLASTIC"/>
    <property type="match status" value="1"/>
</dbReference>
<dbReference type="PANTHER" id="PTHR11055">
    <property type="entry name" value="BIFUNCTIONAL 3'-PHOSPHOADENOSINE 5'-PHOSPHOSULFATE SYNTHASE"/>
    <property type="match status" value="1"/>
</dbReference>
<dbReference type="Pfam" id="PF01583">
    <property type="entry name" value="APS_kinase"/>
    <property type="match status" value="1"/>
</dbReference>
<dbReference type="SUPFAM" id="SSF52540">
    <property type="entry name" value="P-loop containing nucleoside triphosphate hydrolases"/>
    <property type="match status" value="1"/>
</dbReference>
<feature type="chain" id="PRO_0000105925" description="Adenylyl-sulfate kinase">
    <location>
        <begin position="1"/>
        <end position="207"/>
    </location>
</feature>
<feature type="active site" description="Phosphoserine intermediate" evidence="1">
    <location>
        <position position="113"/>
    </location>
</feature>
<feature type="binding site" evidence="1">
    <location>
        <begin position="39"/>
        <end position="46"/>
    </location>
    <ligand>
        <name>ATP</name>
        <dbReference type="ChEBI" id="CHEBI:30616"/>
    </ligand>
</feature>
<sequence>MSSVIAQKDENVVWHQHAVTKTQRADLKQQKPAVLWFTGLSGAGKSTVAGALENRLAEQGFHTYLLDGDNVRHGLCSDLGFSTQDRRENIRRIGELAKLMADAGLIVLTAFISPHRAERQLVRDLLPEGEFIEVFVNTSLEVCEQRDPKGLYKKARAGEIANFTGIDSEYEVPLNPEIDLPAGEKGIEALVDLLVEQLTLRGVISPR</sequence>
<accession>Q8DE75</accession>
<name>CYSC_VIBVU</name>
<reference key="1">
    <citation type="submission" date="2002-12" db="EMBL/GenBank/DDBJ databases">
        <title>Complete genome sequence of Vibrio vulnificus CMCP6.</title>
        <authorList>
            <person name="Rhee J.H."/>
            <person name="Kim S.Y."/>
            <person name="Chung S.S."/>
            <person name="Kim J.J."/>
            <person name="Moon Y.H."/>
            <person name="Jeong H."/>
            <person name="Choy H.E."/>
        </authorList>
    </citation>
    <scope>NUCLEOTIDE SEQUENCE [LARGE SCALE GENOMIC DNA]</scope>
    <source>
        <strain>CMCP6</strain>
    </source>
</reference>
<evidence type="ECO:0000255" key="1">
    <source>
        <dbReference type="HAMAP-Rule" id="MF_00065"/>
    </source>
</evidence>
<gene>
    <name evidence="1" type="primary">cysC</name>
    <name type="ordered locus">VV1_0723</name>
</gene>
<keyword id="KW-0067">ATP-binding</keyword>
<keyword id="KW-0418">Kinase</keyword>
<keyword id="KW-0547">Nucleotide-binding</keyword>
<keyword id="KW-0597">Phosphoprotein</keyword>
<keyword id="KW-0808">Transferase</keyword>
<protein>
    <recommendedName>
        <fullName evidence="1">Adenylyl-sulfate kinase</fullName>
        <ecNumber evidence="1">2.7.1.25</ecNumber>
    </recommendedName>
    <alternativeName>
        <fullName evidence="1">APS kinase</fullName>
    </alternativeName>
    <alternativeName>
        <fullName evidence="1">ATP adenosine-5'-phosphosulfate 3'-phosphotransferase</fullName>
    </alternativeName>
    <alternativeName>
        <fullName evidence="1">Adenosine-5'-phosphosulfate kinase</fullName>
    </alternativeName>
</protein>
<organism>
    <name type="scientific">Vibrio vulnificus (strain CMCP6)</name>
    <dbReference type="NCBI Taxonomy" id="216895"/>
    <lineage>
        <taxon>Bacteria</taxon>
        <taxon>Pseudomonadati</taxon>
        <taxon>Pseudomonadota</taxon>
        <taxon>Gammaproteobacteria</taxon>
        <taxon>Vibrionales</taxon>
        <taxon>Vibrionaceae</taxon>
        <taxon>Vibrio</taxon>
    </lineage>
</organism>